<dbReference type="EC" id="2.5.1.55" evidence="1"/>
<dbReference type="EMBL" id="CP000880">
    <property type="protein sequence ID" value="ABX21086.1"/>
    <property type="molecule type" value="Genomic_DNA"/>
</dbReference>
<dbReference type="SMR" id="A9MPA5"/>
<dbReference type="STRING" id="41514.SARI_01181"/>
<dbReference type="KEGG" id="ses:SARI_01181"/>
<dbReference type="HOGENOM" id="CLU_036666_0_0_6"/>
<dbReference type="UniPathway" id="UPA00030"/>
<dbReference type="UniPathway" id="UPA00357">
    <property type="reaction ID" value="UER00474"/>
</dbReference>
<dbReference type="Proteomes" id="UP000002084">
    <property type="component" value="Chromosome"/>
</dbReference>
<dbReference type="GO" id="GO:0005737">
    <property type="term" value="C:cytoplasm"/>
    <property type="evidence" value="ECO:0007669"/>
    <property type="project" value="UniProtKB-SubCell"/>
</dbReference>
<dbReference type="GO" id="GO:0008676">
    <property type="term" value="F:3-deoxy-8-phosphooctulonate synthase activity"/>
    <property type="evidence" value="ECO:0007669"/>
    <property type="project" value="UniProtKB-UniRule"/>
</dbReference>
<dbReference type="GO" id="GO:0019294">
    <property type="term" value="P:keto-3-deoxy-D-manno-octulosonic acid biosynthetic process"/>
    <property type="evidence" value="ECO:0007669"/>
    <property type="project" value="UniProtKB-UniRule"/>
</dbReference>
<dbReference type="FunFam" id="3.20.20.70:FF:000058">
    <property type="entry name" value="2-dehydro-3-deoxyphosphooctonate aldolase"/>
    <property type="match status" value="1"/>
</dbReference>
<dbReference type="Gene3D" id="3.20.20.70">
    <property type="entry name" value="Aldolase class I"/>
    <property type="match status" value="1"/>
</dbReference>
<dbReference type="HAMAP" id="MF_00056">
    <property type="entry name" value="KDO8P_synth"/>
    <property type="match status" value="1"/>
</dbReference>
<dbReference type="InterPro" id="IPR013785">
    <property type="entry name" value="Aldolase_TIM"/>
</dbReference>
<dbReference type="InterPro" id="IPR006218">
    <property type="entry name" value="DAHP1/KDSA"/>
</dbReference>
<dbReference type="InterPro" id="IPR006269">
    <property type="entry name" value="KDO8P_synthase"/>
</dbReference>
<dbReference type="NCBIfam" id="TIGR01362">
    <property type="entry name" value="KDO8P_synth"/>
    <property type="match status" value="1"/>
</dbReference>
<dbReference type="NCBIfam" id="NF003543">
    <property type="entry name" value="PRK05198.1"/>
    <property type="match status" value="1"/>
</dbReference>
<dbReference type="NCBIfam" id="NF009109">
    <property type="entry name" value="PRK12457.1"/>
    <property type="match status" value="1"/>
</dbReference>
<dbReference type="PANTHER" id="PTHR21057">
    <property type="entry name" value="PHOSPHO-2-DEHYDRO-3-DEOXYHEPTONATE ALDOLASE"/>
    <property type="match status" value="1"/>
</dbReference>
<dbReference type="Pfam" id="PF00793">
    <property type="entry name" value="DAHP_synth_1"/>
    <property type="match status" value="1"/>
</dbReference>
<dbReference type="SUPFAM" id="SSF51569">
    <property type="entry name" value="Aldolase"/>
    <property type="match status" value="1"/>
</dbReference>
<name>KDSA_SALAR</name>
<organism>
    <name type="scientific">Salmonella arizonae (strain ATCC BAA-731 / CDC346-86 / RSK2980)</name>
    <dbReference type="NCBI Taxonomy" id="41514"/>
    <lineage>
        <taxon>Bacteria</taxon>
        <taxon>Pseudomonadati</taxon>
        <taxon>Pseudomonadota</taxon>
        <taxon>Gammaproteobacteria</taxon>
        <taxon>Enterobacterales</taxon>
        <taxon>Enterobacteriaceae</taxon>
        <taxon>Salmonella</taxon>
    </lineage>
</organism>
<proteinExistence type="inferred from homology"/>
<keyword id="KW-0963">Cytoplasm</keyword>
<keyword id="KW-0448">Lipopolysaccharide biosynthesis</keyword>
<keyword id="KW-1185">Reference proteome</keyword>
<keyword id="KW-0808">Transferase</keyword>
<reference key="1">
    <citation type="submission" date="2007-11" db="EMBL/GenBank/DDBJ databases">
        <authorList>
            <consortium name="The Salmonella enterica serovar Arizonae Genome Sequencing Project"/>
            <person name="McClelland M."/>
            <person name="Sanderson E.K."/>
            <person name="Porwollik S."/>
            <person name="Spieth J."/>
            <person name="Clifton W.S."/>
            <person name="Fulton R."/>
            <person name="Chunyan W."/>
            <person name="Wollam A."/>
            <person name="Shah N."/>
            <person name="Pepin K."/>
            <person name="Bhonagiri V."/>
            <person name="Nash W."/>
            <person name="Johnson M."/>
            <person name="Thiruvilangam P."/>
            <person name="Wilson R."/>
        </authorList>
    </citation>
    <scope>NUCLEOTIDE SEQUENCE [LARGE SCALE GENOMIC DNA]</scope>
    <source>
        <strain>ATCC BAA-731 / CDC346-86 / RSK2980</strain>
    </source>
</reference>
<protein>
    <recommendedName>
        <fullName evidence="1">2-dehydro-3-deoxyphosphooctonate aldolase</fullName>
        <ecNumber evidence="1">2.5.1.55</ecNumber>
    </recommendedName>
    <alternativeName>
        <fullName evidence="1">3-deoxy-D-manno-octulosonic acid 8-phosphate synthase</fullName>
    </alternativeName>
    <alternativeName>
        <fullName evidence="1">KDO-8-phosphate synthase</fullName>
        <shortName evidence="1">KDO 8-P synthase</shortName>
        <shortName evidence="1">KDOPS</shortName>
    </alternativeName>
    <alternativeName>
        <fullName evidence="1">Phospho-2-dehydro-3-deoxyoctonate aldolase</fullName>
    </alternativeName>
</protein>
<evidence type="ECO:0000255" key="1">
    <source>
        <dbReference type="HAMAP-Rule" id="MF_00056"/>
    </source>
</evidence>
<accession>A9MPA5</accession>
<gene>
    <name evidence="1" type="primary">kdsA</name>
    <name type="ordered locus">SARI_01181</name>
</gene>
<comment type="catalytic activity">
    <reaction evidence="1">
        <text>D-arabinose 5-phosphate + phosphoenolpyruvate + H2O = 3-deoxy-alpha-D-manno-2-octulosonate-8-phosphate + phosphate</text>
        <dbReference type="Rhea" id="RHEA:14053"/>
        <dbReference type="ChEBI" id="CHEBI:15377"/>
        <dbReference type="ChEBI" id="CHEBI:43474"/>
        <dbReference type="ChEBI" id="CHEBI:57693"/>
        <dbReference type="ChEBI" id="CHEBI:58702"/>
        <dbReference type="ChEBI" id="CHEBI:85985"/>
        <dbReference type="EC" id="2.5.1.55"/>
    </reaction>
</comment>
<comment type="pathway">
    <text evidence="1">Carbohydrate biosynthesis; 3-deoxy-D-manno-octulosonate biosynthesis; 3-deoxy-D-manno-octulosonate from D-ribulose 5-phosphate: step 2/3.</text>
</comment>
<comment type="pathway">
    <text evidence="1">Bacterial outer membrane biogenesis; lipopolysaccharide biosynthesis.</text>
</comment>
<comment type="subcellular location">
    <subcellularLocation>
        <location evidence="1">Cytoplasm</location>
    </subcellularLocation>
</comment>
<comment type="similarity">
    <text evidence="1">Belongs to the KdsA family.</text>
</comment>
<feature type="chain" id="PRO_1000074987" description="2-dehydro-3-deoxyphosphooctonate aldolase">
    <location>
        <begin position="1"/>
        <end position="284"/>
    </location>
</feature>
<sequence length="284" mass="30781">MKQKVVNIGDIKVANDLPFVLFGGMNVLESRDLAMRICEHYVTVTQKLGIPYVFKASFDKANRSSIHSYRGPGLEEGMKIFQELKQTFGVKVITDVHEASQAQPVADVVDVIQLPAFLARQTDLVEAMAKTGAVINVKKPQFVSPGQMGNIVDKFHEGGNDKVILCDRGANFGYDNLVVDMLGFGVMKKVSGNCPVIFDVTHALQCRDPFGAASGGRRGQVTELARAGMAVGLAGLFLESHPDPANAKCDGPSALPLAKLEQFLTQIKAIDDLVKSFDELDTEN</sequence>